<comment type="function">
    <text evidence="1">Catalyzes the reversible isomerization of glucose-6-phosphate to fructose-6-phosphate.</text>
</comment>
<comment type="catalytic activity">
    <reaction evidence="1">
        <text>alpha-D-glucose 6-phosphate = beta-D-fructose 6-phosphate</text>
        <dbReference type="Rhea" id="RHEA:11816"/>
        <dbReference type="ChEBI" id="CHEBI:57634"/>
        <dbReference type="ChEBI" id="CHEBI:58225"/>
        <dbReference type="EC" id="5.3.1.9"/>
    </reaction>
</comment>
<comment type="pathway">
    <text evidence="1">Carbohydrate biosynthesis; gluconeogenesis.</text>
</comment>
<comment type="pathway">
    <text evidence="1">Carbohydrate degradation; glycolysis; D-glyceraldehyde 3-phosphate and glycerone phosphate from D-glucose: step 2/4.</text>
</comment>
<comment type="subcellular location">
    <subcellularLocation>
        <location evidence="1">Cytoplasm</location>
    </subcellularLocation>
</comment>
<comment type="similarity">
    <text evidence="1">Belongs to the GPI family.</text>
</comment>
<feature type="chain" id="PRO_1000060400" description="Glucose-6-phosphate isomerase">
    <location>
        <begin position="1"/>
        <end position="548"/>
    </location>
</feature>
<feature type="active site" description="Proton donor" evidence="1">
    <location>
        <position position="355"/>
    </location>
</feature>
<feature type="active site" evidence="1">
    <location>
        <position position="386"/>
    </location>
</feature>
<feature type="active site" evidence="1">
    <location>
        <position position="514"/>
    </location>
</feature>
<accession>A7FDG8</accession>
<organism>
    <name type="scientific">Yersinia pseudotuberculosis serotype O:1b (strain IP 31758)</name>
    <dbReference type="NCBI Taxonomy" id="349747"/>
    <lineage>
        <taxon>Bacteria</taxon>
        <taxon>Pseudomonadati</taxon>
        <taxon>Pseudomonadota</taxon>
        <taxon>Gammaproteobacteria</taxon>
        <taxon>Enterobacterales</taxon>
        <taxon>Yersiniaceae</taxon>
        <taxon>Yersinia</taxon>
    </lineage>
</organism>
<protein>
    <recommendedName>
        <fullName evidence="1">Glucose-6-phosphate isomerase</fullName>
        <shortName evidence="1">GPI</shortName>
        <ecNumber evidence="1">5.3.1.9</ecNumber>
    </recommendedName>
    <alternativeName>
        <fullName evidence="1">Phosphoglucose isomerase</fullName>
        <shortName evidence="1">PGI</shortName>
    </alternativeName>
    <alternativeName>
        <fullName evidence="1">Phosphohexose isomerase</fullName>
        <shortName evidence="1">PHI</shortName>
    </alternativeName>
</protein>
<dbReference type="EC" id="5.3.1.9" evidence="1"/>
<dbReference type="EMBL" id="CP000720">
    <property type="protein sequence ID" value="ABS48623.1"/>
    <property type="molecule type" value="Genomic_DNA"/>
</dbReference>
<dbReference type="RefSeq" id="WP_002212085.1">
    <property type="nucleotide sequence ID" value="NC_009708.1"/>
</dbReference>
<dbReference type="SMR" id="A7FDG8"/>
<dbReference type="GeneID" id="57975003"/>
<dbReference type="KEGG" id="ypi:YpsIP31758_0302"/>
<dbReference type="HOGENOM" id="CLU_017947_3_1_6"/>
<dbReference type="UniPathway" id="UPA00109">
    <property type="reaction ID" value="UER00181"/>
</dbReference>
<dbReference type="UniPathway" id="UPA00138"/>
<dbReference type="Proteomes" id="UP000002412">
    <property type="component" value="Chromosome"/>
</dbReference>
<dbReference type="GO" id="GO:0005829">
    <property type="term" value="C:cytosol"/>
    <property type="evidence" value="ECO:0007669"/>
    <property type="project" value="TreeGrafter"/>
</dbReference>
<dbReference type="GO" id="GO:0097367">
    <property type="term" value="F:carbohydrate derivative binding"/>
    <property type="evidence" value="ECO:0007669"/>
    <property type="project" value="InterPro"/>
</dbReference>
<dbReference type="GO" id="GO:0004347">
    <property type="term" value="F:glucose-6-phosphate isomerase activity"/>
    <property type="evidence" value="ECO:0007669"/>
    <property type="project" value="UniProtKB-UniRule"/>
</dbReference>
<dbReference type="GO" id="GO:0048029">
    <property type="term" value="F:monosaccharide binding"/>
    <property type="evidence" value="ECO:0007669"/>
    <property type="project" value="TreeGrafter"/>
</dbReference>
<dbReference type="GO" id="GO:0006094">
    <property type="term" value="P:gluconeogenesis"/>
    <property type="evidence" value="ECO:0007669"/>
    <property type="project" value="UniProtKB-UniRule"/>
</dbReference>
<dbReference type="GO" id="GO:0051156">
    <property type="term" value="P:glucose 6-phosphate metabolic process"/>
    <property type="evidence" value="ECO:0007669"/>
    <property type="project" value="TreeGrafter"/>
</dbReference>
<dbReference type="GO" id="GO:0006096">
    <property type="term" value="P:glycolytic process"/>
    <property type="evidence" value="ECO:0007669"/>
    <property type="project" value="UniProtKB-UniRule"/>
</dbReference>
<dbReference type="CDD" id="cd05015">
    <property type="entry name" value="SIS_PGI_1"/>
    <property type="match status" value="1"/>
</dbReference>
<dbReference type="CDD" id="cd05016">
    <property type="entry name" value="SIS_PGI_2"/>
    <property type="match status" value="1"/>
</dbReference>
<dbReference type="FunFam" id="1.10.1390.10:FF:000001">
    <property type="entry name" value="Glucose-6-phosphate isomerase"/>
    <property type="match status" value="1"/>
</dbReference>
<dbReference type="FunFam" id="3.40.50.10490:FF:000004">
    <property type="entry name" value="Glucose-6-phosphate isomerase"/>
    <property type="match status" value="1"/>
</dbReference>
<dbReference type="Gene3D" id="1.10.1390.10">
    <property type="match status" value="1"/>
</dbReference>
<dbReference type="Gene3D" id="3.40.50.10490">
    <property type="entry name" value="Glucose-6-phosphate isomerase like protein, domain 1"/>
    <property type="match status" value="2"/>
</dbReference>
<dbReference type="HAMAP" id="MF_00473">
    <property type="entry name" value="G6P_isomerase"/>
    <property type="match status" value="1"/>
</dbReference>
<dbReference type="InterPro" id="IPR001672">
    <property type="entry name" value="G6P_Isomerase"/>
</dbReference>
<dbReference type="InterPro" id="IPR023096">
    <property type="entry name" value="G6P_Isomerase_C"/>
</dbReference>
<dbReference type="InterPro" id="IPR018189">
    <property type="entry name" value="Phosphoglucose_isomerase_CS"/>
</dbReference>
<dbReference type="InterPro" id="IPR046348">
    <property type="entry name" value="SIS_dom_sf"/>
</dbReference>
<dbReference type="InterPro" id="IPR035476">
    <property type="entry name" value="SIS_PGI_1"/>
</dbReference>
<dbReference type="InterPro" id="IPR035482">
    <property type="entry name" value="SIS_PGI_2"/>
</dbReference>
<dbReference type="NCBIfam" id="NF001211">
    <property type="entry name" value="PRK00179.1"/>
    <property type="match status" value="1"/>
</dbReference>
<dbReference type="PANTHER" id="PTHR11469">
    <property type="entry name" value="GLUCOSE-6-PHOSPHATE ISOMERASE"/>
    <property type="match status" value="1"/>
</dbReference>
<dbReference type="PANTHER" id="PTHR11469:SF1">
    <property type="entry name" value="GLUCOSE-6-PHOSPHATE ISOMERASE"/>
    <property type="match status" value="1"/>
</dbReference>
<dbReference type="Pfam" id="PF00342">
    <property type="entry name" value="PGI"/>
    <property type="match status" value="1"/>
</dbReference>
<dbReference type="PRINTS" id="PR00662">
    <property type="entry name" value="G6PISOMERASE"/>
</dbReference>
<dbReference type="SUPFAM" id="SSF53697">
    <property type="entry name" value="SIS domain"/>
    <property type="match status" value="1"/>
</dbReference>
<dbReference type="PROSITE" id="PS00765">
    <property type="entry name" value="P_GLUCOSE_ISOMERASE_1"/>
    <property type="match status" value="1"/>
</dbReference>
<dbReference type="PROSITE" id="PS00174">
    <property type="entry name" value="P_GLUCOSE_ISOMERASE_2"/>
    <property type="match status" value="1"/>
</dbReference>
<dbReference type="PROSITE" id="PS51463">
    <property type="entry name" value="P_GLUCOSE_ISOMERASE_3"/>
    <property type="match status" value="1"/>
</dbReference>
<gene>
    <name evidence="1" type="primary">pgi</name>
    <name type="ordered locus">YpsIP31758_0302</name>
</gene>
<name>G6PI_YERP3</name>
<evidence type="ECO:0000255" key="1">
    <source>
        <dbReference type="HAMAP-Rule" id="MF_00473"/>
    </source>
</evidence>
<sequence length="548" mass="61161">MKNINPSQTAAWKALQQHFEQMKDVTISSLFAKDDQRFNRFSATFDDQMLVDFSKNRITSETLEKLQDLAKETDLAGAIKSMFSGEKINRTEDRAVLHIALRNRSNTPIVVDGKDVMPEVNAVLAKMKQFCDRVISGDWKGYTGKAITDVVNIGIGGSDLGPYMVTEALRPYKNHLNMHFVSNVDGTHIAEALKPLNPETTLFLVASKTFTTQETMTNAHSARDWFLSAAGDPAHVAKHFAALSTNAKAVGEFGIDTNNMFEFWDWVGGRYSLWSAIGLSIALSVGFEHFEQLLSGAHAMDKHFAETPAEKNLPVLLALIGIWYNNFFGAETEAILPYDQYMHRFPAYFQQGNMESNGKYVDRNGHPVDYQTGPIIWGEPGTNGQHAFYQLIHQGTKLIPCDFIAPAISHNPLSDHHAKLLSNFFAQTEALAFGKSLEDVEAEFAAAGKTPEQVAHVAPFKVFEGNRPTNSILLREITPFSLGALIALYEHKIFTQGVILNIYTFDQWGVELGKQLANRILPELADDQEVTSHDSSTNALINRFKNWR</sequence>
<reference key="1">
    <citation type="journal article" date="2007" name="PLoS Genet.">
        <title>The complete genome sequence of Yersinia pseudotuberculosis IP31758, the causative agent of Far East scarlet-like fever.</title>
        <authorList>
            <person name="Eppinger M."/>
            <person name="Rosovitz M.J."/>
            <person name="Fricke W.F."/>
            <person name="Rasko D.A."/>
            <person name="Kokorina G."/>
            <person name="Fayolle C."/>
            <person name="Lindler L.E."/>
            <person name="Carniel E."/>
            <person name="Ravel J."/>
        </authorList>
    </citation>
    <scope>NUCLEOTIDE SEQUENCE [LARGE SCALE GENOMIC DNA]</scope>
    <source>
        <strain>IP 31758</strain>
    </source>
</reference>
<keyword id="KW-0963">Cytoplasm</keyword>
<keyword id="KW-0312">Gluconeogenesis</keyword>
<keyword id="KW-0324">Glycolysis</keyword>
<keyword id="KW-0413">Isomerase</keyword>
<proteinExistence type="inferred from homology"/>